<gene>
    <name evidence="6" type="primary">KIN14F</name>
    <name evidence="8" type="ordered locus">Os03g0301800</name>
    <name evidence="7" type="ordered locus">LOC_Os03g18980</name>
    <name evidence="9" type="ORF">OsJ_10528</name>
</gene>
<evidence type="ECO:0000255" key="1"/>
<evidence type="ECO:0000255" key="2">
    <source>
        <dbReference type="PROSITE-ProRule" id="PRU00044"/>
    </source>
</evidence>
<evidence type="ECO:0000255" key="3">
    <source>
        <dbReference type="PROSITE-ProRule" id="PRU00283"/>
    </source>
</evidence>
<evidence type="ECO:0000256" key="4">
    <source>
        <dbReference type="SAM" id="MobiDB-lite"/>
    </source>
</evidence>
<evidence type="ECO:0000303" key="5">
    <source>
    </source>
</evidence>
<evidence type="ECO:0000305" key="6"/>
<evidence type="ECO:0000312" key="7">
    <source>
        <dbReference type="EMBL" id="ABF95490.1"/>
    </source>
</evidence>
<evidence type="ECO:0000312" key="8">
    <source>
        <dbReference type="EMBL" id="BAS83776.1"/>
    </source>
</evidence>
<evidence type="ECO:0000312" key="9">
    <source>
        <dbReference type="EMBL" id="EEE58899.1"/>
    </source>
</evidence>
<dbReference type="EMBL" id="DP000009">
    <property type="protein sequence ID" value="ABF95490.1"/>
    <property type="status" value="ALT_SEQ"/>
    <property type="molecule type" value="Genomic_DNA"/>
</dbReference>
<dbReference type="EMBL" id="AP008209">
    <property type="protein sequence ID" value="BAF11781.1"/>
    <property type="status" value="ALT_SEQ"/>
    <property type="molecule type" value="Genomic_DNA"/>
</dbReference>
<dbReference type="EMBL" id="AP014959">
    <property type="protein sequence ID" value="BAS83776.1"/>
    <property type="status" value="ALT_SEQ"/>
    <property type="molecule type" value="Genomic_DNA"/>
</dbReference>
<dbReference type="EMBL" id="CM000140">
    <property type="protein sequence ID" value="EEE58899.1"/>
    <property type="status" value="ALT_SEQ"/>
    <property type="molecule type" value="Genomic_DNA"/>
</dbReference>
<dbReference type="EMBL" id="AK106465">
    <property type="status" value="NOT_ANNOTATED_CDS"/>
    <property type="molecule type" value="mRNA"/>
</dbReference>
<dbReference type="SMR" id="Q10MN5"/>
<dbReference type="FunCoup" id="Q10MN5">
    <property type="interactions" value="82"/>
</dbReference>
<dbReference type="STRING" id="39947.Q10MN5"/>
<dbReference type="PaxDb" id="39947-Q10MN5"/>
<dbReference type="KEGG" id="dosa:Os03g0301800"/>
<dbReference type="eggNOG" id="KOG0239">
    <property type="taxonomic scope" value="Eukaryota"/>
</dbReference>
<dbReference type="InParanoid" id="Q10MN5"/>
<dbReference type="Proteomes" id="UP000000763">
    <property type="component" value="Chromosome 3"/>
</dbReference>
<dbReference type="Proteomes" id="UP000007752">
    <property type="component" value="Chromosome 3"/>
</dbReference>
<dbReference type="Proteomes" id="UP000059680">
    <property type="component" value="Chromosome 3"/>
</dbReference>
<dbReference type="GO" id="GO:0005874">
    <property type="term" value="C:microtubule"/>
    <property type="evidence" value="ECO:0007669"/>
    <property type="project" value="UniProtKB-KW"/>
</dbReference>
<dbReference type="GO" id="GO:0015630">
    <property type="term" value="C:microtubule cytoskeleton"/>
    <property type="evidence" value="ECO:0000318"/>
    <property type="project" value="GO_Central"/>
</dbReference>
<dbReference type="GO" id="GO:0005524">
    <property type="term" value="F:ATP binding"/>
    <property type="evidence" value="ECO:0007669"/>
    <property type="project" value="UniProtKB-KW"/>
</dbReference>
<dbReference type="GO" id="GO:0008017">
    <property type="term" value="F:microtubule binding"/>
    <property type="evidence" value="ECO:0000318"/>
    <property type="project" value="GO_Central"/>
</dbReference>
<dbReference type="GO" id="GO:0003777">
    <property type="term" value="F:microtubule motor activity"/>
    <property type="evidence" value="ECO:0007669"/>
    <property type="project" value="InterPro"/>
</dbReference>
<dbReference type="GO" id="GO:0007018">
    <property type="term" value="P:microtubule-based movement"/>
    <property type="evidence" value="ECO:0007669"/>
    <property type="project" value="InterPro"/>
</dbReference>
<dbReference type="GO" id="GO:0007017">
    <property type="term" value="P:microtubule-based process"/>
    <property type="evidence" value="ECO:0000318"/>
    <property type="project" value="GO_Central"/>
</dbReference>
<dbReference type="CDD" id="cd21203">
    <property type="entry name" value="CH_AtKIN14-like"/>
    <property type="match status" value="1"/>
</dbReference>
<dbReference type="CDD" id="cd01366">
    <property type="entry name" value="KISc_C_terminal"/>
    <property type="match status" value="1"/>
</dbReference>
<dbReference type="FunFam" id="3.40.850.10:FF:000045">
    <property type="entry name" value="Kinesin-like protein KIN-14I isoform A"/>
    <property type="match status" value="1"/>
</dbReference>
<dbReference type="FunFam" id="1.10.418.10:FF:000087">
    <property type="entry name" value="p-loop nucleoside triphosphate hydrolase superfamily protein with CH (Calponin Homology) domain"/>
    <property type="match status" value="1"/>
</dbReference>
<dbReference type="Gene3D" id="1.10.418.10">
    <property type="entry name" value="Calponin-like domain"/>
    <property type="match status" value="1"/>
</dbReference>
<dbReference type="Gene3D" id="3.40.850.10">
    <property type="entry name" value="Kinesin motor domain"/>
    <property type="match status" value="1"/>
</dbReference>
<dbReference type="InterPro" id="IPR001715">
    <property type="entry name" value="CH_dom"/>
</dbReference>
<dbReference type="InterPro" id="IPR036872">
    <property type="entry name" value="CH_dom_sf"/>
</dbReference>
<dbReference type="InterPro" id="IPR027640">
    <property type="entry name" value="Kinesin-like_fam"/>
</dbReference>
<dbReference type="InterPro" id="IPR001752">
    <property type="entry name" value="Kinesin_motor_dom"/>
</dbReference>
<dbReference type="InterPro" id="IPR036961">
    <property type="entry name" value="Kinesin_motor_dom_sf"/>
</dbReference>
<dbReference type="InterPro" id="IPR027417">
    <property type="entry name" value="P-loop_NTPase"/>
</dbReference>
<dbReference type="PANTHER" id="PTHR47972:SF39">
    <property type="entry name" value="KINESIN-LIKE PROTEIN KIN-14I"/>
    <property type="match status" value="1"/>
</dbReference>
<dbReference type="PANTHER" id="PTHR47972">
    <property type="entry name" value="KINESIN-LIKE PROTEIN KLP-3"/>
    <property type="match status" value="1"/>
</dbReference>
<dbReference type="Pfam" id="PF00307">
    <property type="entry name" value="CH"/>
    <property type="match status" value="1"/>
</dbReference>
<dbReference type="Pfam" id="PF00225">
    <property type="entry name" value="Kinesin"/>
    <property type="match status" value="1"/>
</dbReference>
<dbReference type="PRINTS" id="PR00380">
    <property type="entry name" value="KINESINHEAVY"/>
</dbReference>
<dbReference type="SMART" id="SM00033">
    <property type="entry name" value="CH"/>
    <property type="match status" value="1"/>
</dbReference>
<dbReference type="SMART" id="SM00129">
    <property type="entry name" value="KISc"/>
    <property type="match status" value="1"/>
</dbReference>
<dbReference type="SUPFAM" id="SSF47576">
    <property type="entry name" value="Calponin-homology domain, CH-domain"/>
    <property type="match status" value="1"/>
</dbReference>
<dbReference type="SUPFAM" id="SSF52540">
    <property type="entry name" value="P-loop containing nucleoside triphosphate hydrolases"/>
    <property type="match status" value="1"/>
</dbReference>
<dbReference type="PROSITE" id="PS50021">
    <property type="entry name" value="CH"/>
    <property type="match status" value="1"/>
</dbReference>
<dbReference type="PROSITE" id="PS50067">
    <property type="entry name" value="KINESIN_MOTOR_2"/>
    <property type="match status" value="1"/>
</dbReference>
<accession>Q10MN5</accession>
<accession>B9F7W4</accession>
<accession>Q0DSK7</accession>
<keyword id="KW-0067">ATP-binding</keyword>
<keyword id="KW-0175">Coiled coil</keyword>
<keyword id="KW-0493">Microtubule</keyword>
<keyword id="KW-0505">Motor protein</keyword>
<keyword id="KW-0547">Nucleotide-binding</keyword>
<keyword id="KW-1185">Reference proteome</keyword>
<reference key="1">
    <citation type="journal article" date="2005" name="Genome Res.">
        <title>Sequence, annotation, and analysis of synteny between rice chromosome 3 and diverged grass species.</title>
        <authorList>
            <consortium name="The rice chromosome 3 sequencing consortium"/>
            <person name="Buell C.R."/>
            <person name="Yuan Q."/>
            <person name="Ouyang S."/>
            <person name="Liu J."/>
            <person name="Zhu W."/>
            <person name="Wang A."/>
            <person name="Maiti R."/>
            <person name="Haas B."/>
            <person name="Wortman J."/>
            <person name="Pertea M."/>
            <person name="Jones K.M."/>
            <person name="Kim M."/>
            <person name="Overton L."/>
            <person name="Tsitrin T."/>
            <person name="Fadrosh D."/>
            <person name="Bera J."/>
            <person name="Weaver B."/>
            <person name="Jin S."/>
            <person name="Johri S."/>
            <person name="Reardon M."/>
            <person name="Webb K."/>
            <person name="Hill J."/>
            <person name="Moffat K."/>
            <person name="Tallon L."/>
            <person name="Van Aken S."/>
            <person name="Lewis M."/>
            <person name="Utterback T."/>
            <person name="Feldblyum T."/>
            <person name="Zismann V."/>
            <person name="Iobst S."/>
            <person name="Hsiao J."/>
            <person name="de Vazeille A.R."/>
            <person name="Salzberg S.L."/>
            <person name="White O."/>
            <person name="Fraser C.M."/>
            <person name="Yu Y."/>
            <person name="Kim H."/>
            <person name="Rambo T."/>
            <person name="Currie J."/>
            <person name="Collura K."/>
            <person name="Kernodle-Thompson S."/>
            <person name="Wei F."/>
            <person name="Kudrna K."/>
            <person name="Ammiraju J.S.S."/>
            <person name="Luo M."/>
            <person name="Goicoechea J.L."/>
            <person name="Wing R.A."/>
            <person name="Henry D."/>
            <person name="Oates R."/>
            <person name="Palmer M."/>
            <person name="Pries G."/>
            <person name="Saski C."/>
            <person name="Simmons J."/>
            <person name="Soderlund C."/>
            <person name="Nelson W."/>
            <person name="de la Bastide M."/>
            <person name="Spiegel L."/>
            <person name="Nascimento L."/>
            <person name="Huang E."/>
            <person name="Preston R."/>
            <person name="Zutavern T."/>
            <person name="Palmer L."/>
            <person name="O'Shaughnessy A."/>
            <person name="Dike S."/>
            <person name="McCombie W.R."/>
            <person name="Minx P."/>
            <person name="Cordum H."/>
            <person name="Wilson R."/>
            <person name="Jin W."/>
            <person name="Lee H.R."/>
            <person name="Jiang J."/>
            <person name="Jackson S."/>
        </authorList>
    </citation>
    <scope>NUCLEOTIDE SEQUENCE [LARGE SCALE GENOMIC DNA]</scope>
    <source>
        <strain>cv. Nipponbare</strain>
    </source>
</reference>
<reference key="2">
    <citation type="journal article" date="2005" name="Nature">
        <title>The map-based sequence of the rice genome.</title>
        <authorList>
            <consortium name="International rice genome sequencing project (IRGSP)"/>
        </authorList>
    </citation>
    <scope>NUCLEOTIDE SEQUENCE [LARGE SCALE GENOMIC DNA]</scope>
    <source>
        <strain>cv. Nipponbare</strain>
    </source>
</reference>
<reference key="3">
    <citation type="journal article" date="2008" name="Nucleic Acids Res.">
        <title>The rice annotation project database (RAP-DB): 2008 update.</title>
        <authorList>
            <consortium name="The rice annotation project (RAP)"/>
        </authorList>
    </citation>
    <scope>GENOME REANNOTATION</scope>
    <source>
        <strain>cv. Nipponbare</strain>
    </source>
</reference>
<reference key="4">
    <citation type="journal article" date="2013" name="Rice">
        <title>Improvement of the Oryza sativa Nipponbare reference genome using next generation sequence and optical map data.</title>
        <authorList>
            <person name="Kawahara Y."/>
            <person name="de la Bastide M."/>
            <person name="Hamilton J.P."/>
            <person name="Kanamori H."/>
            <person name="McCombie W.R."/>
            <person name="Ouyang S."/>
            <person name="Schwartz D.C."/>
            <person name="Tanaka T."/>
            <person name="Wu J."/>
            <person name="Zhou S."/>
            <person name="Childs K.L."/>
            <person name="Davidson R.M."/>
            <person name="Lin H."/>
            <person name="Quesada-Ocampo L."/>
            <person name="Vaillancourt B."/>
            <person name="Sakai H."/>
            <person name="Lee S.S."/>
            <person name="Kim J."/>
            <person name="Numa H."/>
            <person name="Itoh T."/>
            <person name="Buell C.R."/>
            <person name="Matsumoto T."/>
        </authorList>
    </citation>
    <scope>GENOME REANNOTATION</scope>
    <source>
        <strain>cv. Nipponbare</strain>
    </source>
</reference>
<reference key="5">
    <citation type="journal article" date="2005" name="PLoS Biol.">
        <title>The genomes of Oryza sativa: a history of duplications.</title>
        <authorList>
            <person name="Yu J."/>
            <person name="Wang J."/>
            <person name="Lin W."/>
            <person name="Li S."/>
            <person name="Li H."/>
            <person name="Zhou J."/>
            <person name="Ni P."/>
            <person name="Dong W."/>
            <person name="Hu S."/>
            <person name="Zeng C."/>
            <person name="Zhang J."/>
            <person name="Zhang Y."/>
            <person name="Li R."/>
            <person name="Xu Z."/>
            <person name="Li S."/>
            <person name="Li X."/>
            <person name="Zheng H."/>
            <person name="Cong L."/>
            <person name="Lin L."/>
            <person name="Yin J."/>
            <person name="Geng J."/>
            <person name="Li G."/>
            <person name="Shi J."/>
            <person name="Liu J."/>
            <person name="Lv H."/>
            <person name="Li J."/>
            <person name="Wang J."/>
            <person name="Deng Y."/>
            <person name="Ran L."/>
            <person name="Shi X."/>
            <person name="Wang X."/>
            <person name="Wu Q."/>
            <person name="Li C."/>
            <person name="Ren X."/>
            <person name="Wang J."/>
            <person name="Wang X."/>
            <person name="Li D."/>
            <person name="Liu D."/>
            <person name="Zhang X."/>
            <person name="Ji Z."/>
            <person name="Zhao W."/>
            <person name="Sun Y."/>
            <person name="Zhang Z."/>
            <person name="Bao J."/>
            <person name="Han Y."/>
            <person name="Dong L."/>
            <person name="Ji J."/>
            <person name="Chen P."/>
            <person name="Wu S."/>
            <person name="Liu J."/>
            <person name="Xiao Y."/>
            <person name="Bu D."/>
            <person name="Tan J."/>
            <person name="Yang L."/>
            <person name="Ye C."/>
            <person name="Zhang J."/>
            <person name="Xu J."/>
            <person name="Zhou Y."/>
            <person name="Yu Y."/>
            <person name="Zhang B."/>
            <person name="Zhuang S."/>
            <person name="Wei H."/>
            <person name="Liu B."/>
            <person name="Lei M."/>
            <person name="Yu H."/>
            <person name="Li Y."/>
            <person name="Xu H."/>
            <person name="Wei S."/>
            <person name="He X."/>
            <person name="Fang L."/>
            <person name="Zhang Z."/>
            <person name="Zhang Y."/>
            <person name="Huang X."/>
            <person name="Su Z."/>
            <person name="Tong W."/>
            <person name="Li J."/>
            <person name="Tong Z."/>
            <person name="Li S."/>
            <person name="Ye J."/>
            <person name="Wang L."/>
            <person name="Fang L."/>
            <person name="Lei T."/>
            <person name="Chen C.-S."/>
            <person name="Chen H.-C."/>
            <person name="Xu Z."/>
            <person name="Li H."/>
            <person name="Huang H."/>
            <person name="Zhang F."/>
            <person name="Xu H."/>
            <person name="Li N."/>
            <person name="Zhao C."/>
            <person name="Li S."/>
            <person name="Dong L."/>
            <person name="Huang Y."/>
            <person name="Li L."/>
            <person name="Xi Y."/>
            <person name="Qi Q."/>
            <person name="Li W."/>
            <person name="Zhang B."/>
            <person name="Hu W."/>
            <person name="Zhang Y."/>
            <person name="Tian X."/>
            <person name="Jiao Y."/>
            <person name="Liang X."/>
            <person name="Jin J."/>
            <person name="Gao L."/>
            <person name="Zheng W."/>
            <person name="Hao B."/>
            <person name="Liu S.-M."/>
            <person name="Wang W."/>
            <person name="Yuan L."/>
            <person name="Cao M."/>
            <person name="McDermott J."/>
            <person name="Samudrala R."/>
            <person name="Wang J."/>
            <person name="Wong G.K.-S."/>
            <person name="Yang H."/>
        </authorList>
    </citation>
    <scope>NUCLEOTIDE SEQUENCE [LARGE SCALE GENOMIC DNA]</scope>
    <source>
        <strain>cv. Nipponbare</strain>
    </source>
</reference>
<reference key="6">
    <citation type="journal article" date="2003" name="Science">
        <title>Collection, mapping, and annotation of over 28,000 cDNA clones from japonica rice.</title>
        <authorList>
            <consortium name="The rice full-length cDNA consortium"/>
        </authorList>
    </citation>
    <scope>NUCLEOTIDE SEQUENCE [LARGE SCALE MRNA] OF 498-1007</scope>
    <source>
        <strain>cv. Nipponbare</strain>
    </source>
</reference>
<reference key="7">
    <citation type="journal article" date="2009" name="Ann. Bot.">
        <title>Evaluating the microtubule cytoskeleton and its interacting proteins in monocots by mining the rice genome.</title>
        <authorList>
            <person name="Guo L."/>
            <person name="Ho C.M."/>
            <person name="Kong Z."/>
            <person name="Lee Y.R."/>
            <person name="Qian Q."/>
            <person name="Liu B."/>
        </authorList>
    </citation>
    <scope>GENE FAMILY</scope>
    <scope>NOMENCLATURE</scope>
</reference>
<sequence length="1007" mass="110898">MAEAAALFSLSAAAVVEDVLRQHGCRLSDRDLASRRAEEAAARRNEAAGWLRRTVGAVAARDLPEEPSEEEFRLGLRNGQILCGALNRVHPGAVPKACAHVVFVNLIRSRCAVCHCSVMVVVNTAADSVLQPDGAALSAFQYFENVRNFLVAAQEIGLPCFEASDLEQGGKSARVVNCVLALKSYGDWKQCGGTGPWKYGGNLKPSASGKSFVRKNSEPFRRCQSMNEGEVPYEEAGFSGDYHLDSGDMSTSRPLKMLVSAVLSDKRPDEVPQVKAALKNGTDGTKSFSKSKMDTIEVYSKHRQTKKEAYGEVTLKQYSMLQLQSKHVEELKADIRATKAGMEFMQMKYSEDINILGRHLFSLAHAASGYHIVLEENRKLYNQVQDLKGSIRVYCRVRPFLPGQVSSCAVGSIDEGNITIITPSKSGKEGRKTFSFNKVFGPSATQDEVFLDTQPLIRSVLDGYNVCIFAYGQTGSGKTYTMSGPKNMTEQTQGVNYRALSDLFKLAEQRKGAFIYDIAVQMIEIYNEQVRDLLVNDGLNKRLEIRNNSQNGLNVPDASLVCVASTMDVMELMNVGQKNRAVGATALNDRSSRSHSCLTVHVQGRDLTSGTILRGCMHLVDLAGSERVDKSEVTGERLKEAQHINKSLSALGDVIASLAQKSAHVPYRNSKLTQLLQDSLGGQAKTLMFVHISPESDALGESISTLKFAERVSTVELGAARLNKESGEVKELKEQIARLKSSLAMKDSGSEQNINRDPEAFNMKMPSPGFSNRRQGSCELVSSQTNFRQPMEDVGNIEVRANPTLRQKKPSFDLQDLLASNDSPSWPDSISRANFQMGEERVTIGGEWIDKVVVNNNNSVGDWEGDSAALPDFFYQRYHSGTRDKQYLRNNSRKKDGNEFEQQRPRFYSTNTDDSDDIDIATSDSSESDALWQFNVQSINSSISENGSKIKKPQTKLRESSDTRTPLHSQIPSASRKTSNGNRSGRQPLSGSDSRRLSSNGRHAGTK</sequence>
<comment type="similarity">
    <text evidence="5">Belongs to the TRAFAC class myosin-kinesin ATPase superfamily. Kinesin family. KIN-14 subfamily.</text>
</comment>
<comment type="sequence caution" evidence="6">
    <conflict type="erroneous gene model prediction">
        <sequence resource="EMBL-CDS" id="ABF95490"/>
    </conflict>
</comment>
<comment type="sequence caution" evidence="6">
    <conflict type="erroneous gene model prediction">
        <sequence resource="EMBL-CDS" id="BAF11781"/>
    </conflict>
</comment>
<comment type="sequence caution" evidence="6">
    <conflict type="erroneous gene model prediction">
        <sequence resource="EMBL-CDS" id="BAS83776"/>
    </conflict>
</comment>
<comment type="sequence caution" evidence="6">
    <conflict type="erroneous gene model prediction">
        <sequence resource="EMBL-CDS" id="EEE58899"/>
    </conflict>
</comment>
<organism>
    <name type="scientific">Oryza sativa subsp. japonica</name>
    <name type="common">Rice</name>
    <dbReference type="NCBI Taxonomy" id="39947"/>
    <lineage>
        <taxon>Eukaryota</taxon>
        <taxon>Viridiplantae</taxon>
        <taxon>Streptophyta</taxon>
        <taxon>Embryophyta</taxon>
        <taxon>Tracheophyta</taxon>
        <taxon>Spermatophyta</taxon>
        <taxon>Magnoliopsida</taxon>
        <taxon>Liliopsida</taxon>
        <taxon>Poales</taxon>
        <taxon>Poaceae</taxon>
        <taxon>BOP clade</taxon>
        <taxon>Oryzoideae</taxon>
        <taxon>Oryzeae</taxon>
        <taxon>Oryzinae</taxon>
        <taxon>Oryza</taxon>
        <taxon>Oryza sativa</taxon>
    </lineage>
</organism>
<feature type="chain" id="PRO_0000438632" description="Kinesin-like protein KIN-14F">
    <location>
        <begin position="1"/>
        <end position="1007"/>
    </location>
</feature>
<feature type="domain" description="Calponin-homology (CH)" evidence="2">
    <location>
        <begin position="41"/>
        <end position="187"/>
    </location>
</feature>
<feature type="domain" description="Kinesin motor" evidence="3">
    <location>
        <begin position="390"/>
        <end position="715"/>
    </location>
</feature>
<feature type="region of interest" description="Disordered" evidence="4">
    <location>
        <begin position="885"/>
        <end position="924"/>
    </location>
</feature>
<feature type="region of interest" description="Disordered" evidence="4">
    <location>
        <begin position="944"/>
        <end position="1007"/>
    </location>
</feature>
<feature type="coiled-coil region" evidence="1">
    <location>
        <begin position="718"/>
        <end position="748"/>
    </location>
</feature>
<feature type="compositionally biased region" description="Basic and acidic residues" evidence="4">
    <location>
        <begin position="885"/>
        <end position="904"/>
    </location>
</feature>
<feature type="compositionally biased region" description="Polar residues" evidence="4">
    <location>
        <begin position="963"/>
        <end position="1001"/>
    </location>
</feature>
<feature type="binding site" evidence="3">
    <location>
        <begin position="472"/>
        <end position="479"/>
    </location>
    <ligand>
        <name>ATP</name>
        <dbReference type="ChEBI" id="CHEBI:30616"/>
    </ligand>
</feature>
<feature type="sequence conflict" description="In Ref. 6; AK106465." evidence="6" ref="6">
    <original>S</original>
    <variation>N</variation>
    <location>
        <position position="662"/>
    </location>
</feature>
<proteinExistence type="evidence at transcript level"/>
<name>KN14F_ORYSJ</name>
<protein>
    <recommendedName>
        <fullName evidence="6">Kinesin-like protein KIN-14F</fullName>
    </recommendedName>
</protein>